<reference key="1">
    <citation type="journal article" date="2005" name="Science">
        <title>The transcriptional landscape of the mammalian genome.</title>
        <authorList>
            <person name="Carninci P."/>
            <person name="Kasukawa T."/>
            <person name="Katayama S."/>
            <person name="Gough J."/>
            <person name="Frith M.C."/>
            <person name="Maeda N."/>
            <person name="Oyama R."/>
            <person name="Ravasi T."/>
            <person name="Lenhard B."/>
            <person name="Wells C."/>
            <person name="Kodzius R."/>
            <person name="Shimokawa K."/>
            <person name="Bajic V.B."/>
            <person name="Brenner S.E."/>
            <person name="Batalov S."/>
            <person name="Forrest A.R."/>
            <person name="Zavolan M."/>
            <person name="Davis M.J."/>
            <person name="Wilming L.G."/>
            <person name="Aidinis V."/>
            <person name="Allen J.E."/>
            <person name="Ambesi-Impiombato A."/>
            <person name="Apweiler R."/>
            <person name="Aturaliya R.N."/>
            <person name="Bailey T.L."/>
            <person name="Bansal M."/>
            <person name="Baxter L."/>
            <person name="Beisel K.W."/>
            <person name="Bersano T."/>
            <person name="Bono H."/>
            <person name="Chalk A.M."/>
            <person name="Chiu K.P."/>
            <person name="Choudhary V."/>
            <person name="Christoffels A."/>
            <person name="Clutterbuck D.R."/>
            <person name="Crowe M.L."/>
            <person name="Dalla E."/>
            <person name="Dalrymple B.P."/>
            <person name="de Bono B."/>
            <person name="Della Gatta G."/>
            <person name="di Bernardo D."/>
            <person name="Down T."/>
            <person name="Engstrom P."/>
            <person name="Fagiolini M."/>
            <person name="Faulkner G."/>
            <person name="Fletcher C.F."/>
            <person name="Fukushima T."/>
            <person name="Furuno M."/>
            <person name="Futaki S."/>
            <person name="Gariboldi M."/>
            <person name="Georgii-Hemming P."/>
            <person name="Gingeras T.R."/>
            <person name="Gojobori T."/>
            <person name="Green R.E."/>
            <person name="Gustincich S."/>
            <person name="Harbers M."/>
            <person name="Hayashi Y."/>
            <person name="Hensch T.K."/>
            <person name="Hirokawa N."/>
            <person name="Hill D."/>
            <person name="Huminiecki L."/>
            <person name="Iacono M."/>
            <person name="Ikeo K."/>
            <person name="Iwama A."/>
            <person name="Ishikawa T."/>
            <person name="Jakt M."/>
            <person name="Kanapin A."/>
            <person name="Katoh M."/>
            <person name="Kawasawa Y."/>
            <person name="Kelso J."/>
            <person name="Kitamura H."/>
            <person name="Kitano H."/>
            <person name="Kollias G."/>
            <person name="Krishnan S.P."/>
            <person name="Kruger A."/>
            <person name="Kummerfeld S.K."/>
            <person name="Kurochkin I.V."/>
            <person name="Lareau L.F."/>
            <person name="Lazarevic D."/>
            <person name="Lipovich L."/>
            <person name="Liu J."/>
            <person name="Liuni S."/>
            <person name="McWilliam S."/>
            <person name="Madan Babu M."/>
            <person name="Madera M."/>
            <person name="Marchionni L."/>
            <person name="Matsuda H."/>
            <person name="Matsuzawa S."/>
            <person name="Miki H."/>
            <person name="Mignone F."/>
            <person name="Miyake S."/>
            <person name="Morris K."/>
            <person name="Mottagui-Tabar S."/>
            <person name="Mulder N."/>
            <person name="Nakano N."/>
            <person name="Nakauchi H."/>
            <person name="Ng P."/>
            <person name="Nilsson R."/>
            <person name="Nishiguchi S."/>
            <person name="Nishikawa S."/>
            <person name="Nori F."/>
            <person name="Ohara O."/>
            <person name="Okazaki Y."/>
            <person name="Orlando V."/>
            <person name="Pang K.C."/>
            <person name="Pavan W.J."/>
            <person name="Pavesi G."/>
            <person name="Pesole G."/>
            <person name="Petrovsky N."/>
            <person name="Piazza S."/>
            <person name="Reed J."/>
            <person name="Reid J.F."/>
            <person name="Ring B.Z."/>
            <person name="Ringwald M."/>
            <person name="Rost B."/>
            <person name="Ruan Y."/>
            <person name="Salzberg S.L."/>
            <person name="Sandelin A."/>
            <person name="Schneider C."/>
            <person name="Schoenbach C."/>
            <person name="Sekiguchi K."/>
            <person name="Semple C.A."/>
            <person name="Seno S."/>
            <person name="Sessa L."/>
            <person name="Sheng Y."/>
            <person name="Shibata Y."/>
            <person name="Shimada H."/>
            <person name="Shimada K."/>
            <person name="Silva D."/>
            <person name="Sinclair B."/>
            <person name="Sperling S."/>
            <person name="Stupka E."/>
            <person name="Sugiura K."/>
            <person name="Sultana R."/>
            <person name="Takenaka Y."/>
            <person name="Taki K."/>
            <person name="Tammoja K."/>
            <person name="Tan S.L."/>
            <person name="Tang S."/>
            <person name="Taylor M.S."/>
            <person name="Tegner J."/>
            <person name="Teichmann S.A."/>
            <person name="Ueda H.R."/>
            <person name="van Nimwegen E."/>
            <person name="Verardo R."/>
            <person name="Wei C.L."/>
            <person name="Yagi K."/>
            <person name="Yamanishi H."/>
            <person name="Zabarovsky E."/>
            <person name="Zhu S."/>
            <person name="Zimmer A."/>
            <person name="Hide W."/>
            <person name="Bult C."/>
            <person name="Grimmond S.M."/>
            <person name="Teasdale R.D."/>
            <person name="Liu E.T."/>
            <person name="Brusic V."/>
            <person name="Quackenbush J."/>
            <person name="Wahlestedt C."/>
            <person name="Mattick J.S."/>
            <person name="Hume D.A."/>
            <person name="Kai C."/>
            <person name="Sasaki D."/>
            <person name="Tomaru Y."/>
            <person name="Fukuda S."/>
            <person name="Kanamori-Katayama M."/>
            <person name="Suzuki M."/>
            <person name="Aoki J."/>
            <person name="Arakawa T."/>
            <person name="Iida J."/>
            <person name="Imamura K."/>
            <person name="Itoh M."/>
            <person name="Kato T."/>
            <person name="Kawaji H."/>
            <person name="Kawagashira N."/>
            <person name="Kawashima T."/>
            <person name="Kojima M."/>
            <person name="Kondo S."/>
            <person name="Konno H."/>
            <person name="Nakano K."/>
            <person name="Ninomiya N."/>
            <person name="Nishio T."/>
            <person name="Okada M."/>
            <person name="Plessy C."/>
            <person name="Shibata K."/>
            <person name="Shiraki T."/>
            <person name="Suzuki S."/>
            <person name="Tagami M."/>
            <person name="Waki K."/>
            <person name="Watahiki A."/>
            <person name="Okamura-Oho Y."/>
            <person name="Suzuki H."/>
            <person name="Kawai J."/>
            <person name="Hayashizaki Y."/>
        </authorList>
    </citation>
    <scope>NUCLEOTIDE SEQUENCE [LARGE SCALE MRNA]</scope>
    <source>
        <strain>C57BL/6J</strain>
        <tissue>Embryonic stem cell</tissue>
        <tissue>Testis</tissue>
    </source>
</reference>
<reference key="2">
    <citation type="journal article" date="2004" name="Genome Res.">
        <title>The status, quality, and expansion of the NIH full-length cDNA project: the Mammalian Gene Collection (MGC).</title>
        <authorList>
            <consortium name="The MGC Project Team"/>
        </authorList>
    </citation>
    <scope>NUCLEOTIDE SEQUENCE [LARGE SCALE MRNA]</scope>
    <source>
        <tissue>Testis</tissue>
    </source>
</reference>
<reference key="3">
    <citation type="journal article" date="2010" name="Cell">
        <title>A tissue-specific atlas of mouse protein phosphorylation and expression.</title>
        <authorList>
            <person name="Huttlin E.L."/>
            <person name="Jedrychowski M.P."/>
            <person name="Elias J.E."/>
            <person name="Goswami T."/>
            <person name="Rad R."/>
            <person name="Beausoleil S.A."/>
            <person name="Villen J."/>
            <person name="Haas W."/>
            <person name="Sowa M.E."/>
            <person name="Gygi S.P."/>
        </authorList>
    </citation>
    <scope>IDENTIFICATION BY MASS SPECTROMETRY [LARGE SCALE ANALYSIS]</scope>
    <source>
        <tissue>Testis</tissue>
    </source>
</reference>
<sequence length="151" mass="17282">MEPESIEICPYNPHHRIPLSRFQYHLASCRKKNPKKAKKMASCKYNACHVVPIRKLAEHEATCVNRSSVEEEDTLGPLQVSLPQPQNQDTLQVRWLSNPDIWNVDGANCHPMFVLKSFVPQKLVCESDIQESRGGDQCPEDPQTRTRKANF</sequence>
<dbReference type="EMBL" id="AK018886">
    <property type="protein sequence ID" value="BAB31474.1"/>
    <property type="molecule type" value="mRNA"/>
</dbReference>
<dbReference type="EMBL" id="AK019131">
    <property type="protein sequence ID" value="BAB31558.1"/>
    <property type="molecule type" value="mRNA"/>
</dbReference>
<dbReference type="EMBL" id="AK160150">
    <property type="protein sequence ID" value="BAE35658.1"/>
    <property type="molecule type" value="mRNA"/>
</dbReference>
<dbReference type="EMBL" id="BC048439">
    <property type="protein sequence ID" value="AAH48439.1"/>
    <property type="molecule type" value="mRNA"/>
</dbReference>
<dbReference type="CCDS" id="CCDS17007.1"/>
<dbReference type="RefSeq" id="NP_080906.1">
    <property type="nucleotide sequence ID" value="NM_026630.3"/>
</dbReference>
<dbReference type="SMR" id="Q9CWD0"/>
<dbReference type="FunCoup" id="Q9CWD0">
    <property type="interactions" value="1"/>
</dbReference>
<dbReference type="STRING" id="10090.ENSMUSP00000092237"/>
<dbReference type="SwissPalm" id="Q9CWD0"/>
<dbReference type="PaxDb" id="10090-ENSMUSP00000092237"/>
<dbReference type="ProteomicsDB" id="271189"/>
<dbReference type="Antibodypedia" id="51807">
    <property type="antibodies" value="13 antibodies from 8 providers"/>
</dbReference>
<dbReference type="DNASU" id="68236"/>
<dbReference type="Ensembl" id="ENSMUST00000094653.6">
    <property type="protein sequence ID" value="ENSMUSP00000092237.5"/>
    <property type="gene ID" value="ENSMUSG00000070708.6"/>
</dbReference>
<dbReference type="GeneID" id="68236"/>
<dbReference type="KEGG" id="mmu:68236"/>
<dbReference type="UCSC" id="uc008nsm.1">
    <property type="organism name" value="mouse"/>
</dbReference>
<dbReference type="AGR" id="MGI:1915486"/>
<dbReference type="CTD" id="149699"/>
<dbReference type="MGI" id="MGI:1915486">
    <property type="gene designation" value="Gtsf1l"/>
</dbReference>
<dbReference type="VEuPathDB" id="HostDB:ENSMUSG00000070708"/>
<dbReference type="eggNOG" id="KOG4376">
    <property type="taxonomic scope" value="Eukaryota"/>
</dbReference>
<dbReference type="GeneTree" id="ENSGT00940000163226"/>
<dbReference type="HOGENOM" id="CLU_108762_1_0_1"/>
<dbReference type="InParanoid" id="Q9CWD0"/>
<dbReference type="OMA" id="DDPQQTF"/>
<dbReference type="OrthoDB" id="10069248at2759"/>
<dbReference type="PhylomeDB" id="Q9CWD0"/>
<dbReference type="TreeFam" id="TF323837"/>
<dbReference type="BioGRID-ORCS" id="68236">
    <property type="hits" value="2 hits in 77 CRISPR screens"/>
</dbReference>
<dbReference type="PRO" id="PR:Q9CWD0"/>
<dbReference type="Proteomes" id="UP000000589">
    <property type="component" value="Chromosome 2"/>
</dbReference>
<dbReference type="RNAct" id="Q9CWD0">
    <property type="molecule type" value="protein"/>
</dbReference>
<dbReference type="Bgee" id="ENSMUSG00000070708">
    <property type="expression patterns" value="Expressed in seminiferous tubule of testis and 24 other cell types or tissues"/>
</dbReference>
<dbReference type="GO" id="GO:0044877">
    <property type="term" value="F:protein-containing complex binding"/>
    <property type="evidence" value="ECO:0000314"/>
    <property type="project" value="MGI"/>
</dbReference>
<dbReference type="GO" id="GO:0008270">
    <property type="term" value="F:zinc ion binding"/>
    <property type="evidence" value="ECO:0007669"/>
    <property type="project" value="UniProtKB-KW"/>
</dbReference>
<dbReference type="InterPro" id="IPR022776">
    <property type="entry name" value="TRM13/UPF0224_CHHC_Znf_dom"/>
</dbReference>
<dbReference type="InterPro" id="IPR051591">
    <property type="entry name" value="UPF0224_FAM112_RNA_Proc"/>
</dbReference>
<dbReference type="InterPro" id="IPR036236">
    <property type="entry name" value="Znf_C2H2_sf"/>
</dbReference>
<dbReference type="PANTHER" id="PTHR21402">
    <property type="entry name" value="GAMETOCYTE SPECIFIC FACTOR 1-RELATED"/>
    <property type="match status" value="1"/>
</dbReference>
<dbReference type="PANTHER" id="PTHR21402:SF3">
    <property type="entry name" value="GAMETOCYTE-SPECIFIC FACTOR 1-LIKE"/>
    <property type="match status" value="1"/>
</dbReference>
<dbReference type="Pfam" id="PF05253">
    <property type="entry name" value="zf-U11-48K"/>
    <property type="match status" value="2"/>
</dbReference>
<dbReference type="SUPFAM" id="SSF57667">
    <property type="entry name" value="beta-beta-alpha zinc fingers"/>
    <property type="match status" value="1"/>
</dbReference>
<dbReference type="PROSITE" id="PS51800">
    <property type="entry name" value="ZF_CHHC_U11_48K"/>
    <property type="match status" value="2"/>
</dbReference>
<name>GTSFL_MOUSE</name>
<gene>
    <name type="primary">Gtsf1l</name>
    <name type="synonym">Fam112a</name>
</gene>
<proteinExistence type="evidence at protein level"/>
<evidence type="ECO:0000255" key="1">
    <source>
        <dbReference type="PROSITE-ProRule" id="PRU01141"/>
    </source>
</evidence>
<evidence type="ECO:0000256" key="2">
    <source>
        <dbReference type="SAM" id="MobiDB-lite"/>
    </source>
</evidence>
<evidence type="ECO:0000305" key="3"/>
<comment type="similarity">
    <text evidence="3">Belongs to the UPF0224 (FAM112) family.</text>
</comment>
<keyword id="KW-0479">Metal-binding</keyword>
<keyword id="KW-1185">Reference proteome</keyword>
<keyword id="KW-0677">Repeat</keyword>
<keyword id="KW-0862">Zinc</keyword>
<keyword id="KW-0863">Zinc-finger</keyword>
<protein>
    <recommendedName>
        <fullName>Gametocyte-specific factor 1-like</fullName>
    </recommendedName>
    <alternativeName>
        <fullName>Protein FAM112A</fullName>
    </alternativeName>
</protein>
<accession>Q9CWD0</accession>
<accession>Q3TVG1</accession>
<accession>Q9D2S8</accession>
<feature type="chain" id="PRO_0000221620" description="Gametocyte-specific factor 1-like">
    <location>
        <begin position="1"/>
        <end position="151"/>
    </location>
</feature>
<feature type="zinc finger region" description="CHHC U11-48K-type 1" evidence="1">
    <location>
        <begin position="6"/>
        <end position="33"/>
    </location>
</feature>
<feature type="zinc finger region" description="CHHC U11-48K-type 2" evidence="1">
    <location>
        <begin position="40"/>
        <end position="67"/>
    </location>
</feature>
<feature type="region of interest" description="Disordered" evidence="2">
    <location>
        <begin position="130"/>
        <end position="151"/>
    </location>
</feature>
<feature type="binding site" evidence="1">
    <location>
        <position position="9"/>
    </location>
    <ligand>
        <name>Zn(2+)</name>
        <dbReference type="ChEBI" id="CHEBI:29105"/>
        <label>1</label>
    </ligand>
</feature>
<feature type="binding site" evidence="1">
    <location>
        <position position="15"/>
    </location>
    <ligand>
        <name>Zn(2+)</name>
        <dbReference type="ChEBI" id="CHEBI:29105"/>
        <label>1</label>
    </ligand>
</feature>
<feature type="binding site" evidence="1">
    <location>
        <position position="25"/>
    </location>
    <ligand>
        <name>Zn(2+)</name>
        <dbReference type="ChEBI" id="CHEBI:29105"/>
        <label>1</label>
    </ligand>
</feature>
<feature type="binding site" evidence="1">
    <location>
        <position position="29"/>
    </location>
    <ligand>
        <name>Zn(2+)</name>
        <dbReference type="ChEBI" id="CHEBI:29105"/>
        <label>1</label>
    </ligand>
</feature>
<feature type="binding site" evidence="1">
    <location>
        <position position="43"/>
    </location>
    <ligand>
        <name>Zn(2+)</name>
        <dbReference type="ChEBI" id="CHEBI:29105"/>
        <label>2</label>
    </ligand>
</feature>
<feature type="binding site" evidence="1">
    <location>
        <position position="49"/>
    </location>
    <ligand>
        <name>Zn(2+)</name>
        <dbReference type="ChEBI" id="CHEBI:29105"/>
        <label>2</label>
    </ligand>
</feature>
<feature type="binding site" evidence="1">
    <location>
        <position position="59"/>
    </location>
    <ligand>
        <name>Zn(2+)</name>
        <dbReference type="ChEBI" id="CHEBI:29105"/>
        <label>2</label>
    </ligand>
</feature>
<feature type="binding site" evidence="1">
    <location>
        <position position="63"/>
    </location>
    <ligand>
        <name>Zn(2+)</name>
        <dbReference type="ChEBI" id="CHEBI:29105"/>
        <label>2</label>
    </ligand>
</feature>
<feature type="sequence conflict" description="In Ref. 1; BAB31474." evidence="3" ref="1">
    <original>D</original>
    <variation>E</variation>
    <location>
        <position position="128"/>
    </location>
</feature>
<organism>
    <name type="scientific">Mus musculus</name>
    <name type="common">Mouse</name>
    <dbReference type="NCBI Taxonomy" id="10090"/>
    <lineage>
        <taxon>Eukaryota</taxon>
        <taxon>Metazoa</taxon>
        <taxon>Chordata</taxon>
        <taxon>Craniata</taxon>
        <taxon>Vertebrata</taxon>
        <taxon>Euteleostomi</taxon>
        <taxon>Mammalia</taxon>
        <taxon>Eutheria</taxon>
        <taxon>Euarchontoglires</taxon>
        <taxon>Glires</taxon>
        <taxon>Rodentia</taxon>
        <taxon>Myomorpha</taxon>
        <taxon>Muroidea</taxon>
        <taxon>Muridae</taxon>
        <taxon>Murinae</taxon>
        <taxon>Mus</taxon>
        <taxon>Mus</taxon>
    </lineage>
</organism>